<keyword id="KW-0007">Acetylation</keyword>
<keyword id="KW-0687">Ribonucleoprotein</keyword>
<keyword id="KW-0689">Ribosomal protein</keyword>
<keyword id="KW-0694">RNA-binding</keyword>
<keyword id="KW-0699">rRNA-binding</keyword>
<gene>
    <name evidence="1" type="primary">rplJ</name>
    <name type="ordered locus">ECSE_4272</name>
</gene>
<comment type="function">
    <text evidence="1">Forms part of the ribosomal stalk, playing a central role in the interaction of the ribosome with GTP-bound translation factors.</text>
</comment>
<comment type="subunit">
    <text evidence="1">Part of the ribosomal stalk of the 50S ribosomal subunit. The N-terminus interacts with L11 and the large rRNA to form the base of the stalk. The C-terminus forms an elongated spine to which L12 dimers bind in a sequential fashion forming a multimeric L10(L12)X complex.</text>
</comment>
<comment type="similarity">
    <text evidence="1">Belongs to the universal ribosomal protein uL10 family.</text>
</comment>
<feature type="chain" id="PRO_1000120958" description="Large ribosomal subunit protein uL10">
    <location>
        <begin position="1"/>
        <end position="165"/>
    </location>
</feature>
<feature type="modified residue" description="N6-acetyllysine" evidence="1">
    <location>
        <position position="37"/>
    </location>
</feature>
<feature type="modified residue" description="N6-acetyllysine" evidence="1">
    <location>
        <position position="105"/>
    </location>
</feature>
<accession>B6I5J5</accession>
<dbReference type="EMBL" id="AP009240">
    <property type="protein sequence ID" value="BAG79796.1"/>
    <property type="molecule type" value="Genomic_DNA"/>
</dbReference>
<dbReference type="RefSeq" id="WP_001207201.1">
    <property type="nucleotide sequence ID" value="NC_011415.1"/>
</dbReference>
<dbReference type="SMR" id="B6I5J5"/>
<dbReference type="GeneID" id="93777909"/>
<dbReference type="KEGG" id="ecy:ECSE_4272"/>
<dbReference type="HOGENOM" id="CLU_092227_0_2_6"/>
<dbReference type="Proteomes" id="UP000008199">
    <property type="component" value="Chromosome"/>
</dbReference>
<dbReference type="GO" id="GO:0015934">
    <property type="term" value="C:large ribosomal subunit"/>
    <property type="evidence" value="ECO:0007669"/>
    <property type="project" value="InterPro"/>
</dbReference>
<dbReference type="GO" id="GO:0070180">
    <property type="term" value="F:large ribosomal subunit rRNA binding"/>
    <property type="evidence" value="ECO:0007669"/>
    <property type="project" value="UniProtKB-UniRule"/>
</dbReference>
<dbReference type="GO" id="GO:0003735">
    <property type="term" value="F:structural constituent of ribosome"/>
    <property type="evidence" value="ECO:0007669"/>
    <property type="project" value="InterPro"/>
</dbReference>
<dbReference type="GO" id="GO:0006412">
    <property type="term" value="P:translation"/>
    <property type="evidence" value="ECO:0007669"/>
    <property type="project" value="UniProtKB-UniRule"/>
</dbReference>
<dbReference type="CDD" id="cd05797">
    <property type="entry name" value="Ribosomal_L10"/>
    <property type="match status" value="1"/>
</dbReference>
<dbReference type="FunFam" id="3.30.70.1730:FF:000001">
    <property type="entry name" value="50S ribosomal protein L10"/>
    <property type="match status" value="1"/>
</dbReference>
<dbReference type="Gene3D" id="3.30.70.1730">
    <property type="match status" value="1"/>
</dbReference>
<dbReference type="Gene3D" id="6.10.250.2350">
    <property type="match status" value="1"/>
</dbReference>
<dbReference type="HAMAP" id="MF_00362">
    <property type="entry name" value="Ribosomal_uL10"/>
    <property type="match status" value="1"/>
</dbReference>
<dbReference type="InterPro" id="IPR001790">
    <property type="entry name" value="Ribosomal_uL10"/>
</dbReference>
<dbReference type="InterPro" id="IPR043141">
    <property type="entry name" value="Ribosomal_uL10-like_sf"/>
</dbReference>
<dbReference type="InterPro" id="IPR022973">
    <property type="entry name" value="Ribosomal_uL10_bac"/>
</dbReference>
<dbReference type="InterPro" id="IPR047865">
    <property type="entry name" value="Ribosomal_uL10_bac_type"/>
</dbReference>
<dbReference type="InterPro" id="IPR002363">
    <property type="entry name" value="Ribosomal_uL10_CS_bac"/>
</dbReference>
<dbReference type="NCBIfam" id="NF000955">
    <property type="entry name" value="PRK00099.1-1"/>
    <property type="match status" value="1"/>
</dbReference>
<dbReference type="PANTHER" id="PTHR11560">
    <property type="entry name" value="39S RIBOSOMAL PROTEIN L10, MITOCHONDRIAL"/>
    <property type="match status" value="1"/>
</dbReference>
<dbReference type="Pfam" id="PF00466">
    <property type="entry name" value="Ribosomal_L10"/>
    <property type="match status" value="1"/>
</dbReference>
<dbReference type="SUPFAM" id="SSF160369">
    <property type="entry name" value="Ribosomal protein L10-like"/>
    <property type="match status" value="1"/>
</dbReference>
<dbReference type="PROSITE" id="PS01109">
    <property type="entry name" value="RIBOSOMAL_L10"/>
    <property type="match status" value="1"/>
</dbReference>
<evidence type="ECO:0000255" key="1">
    <source>
        <dbReference type="HAMAP-Rule" id="MF_00362"/>
    </source>
</evidence>
<evidence type="ECO:0000305" key="2"/>
<proteinExistence type="inferred from homology"/>
<protein>
    <recommendedName>
        <fullName evidence="1">Large ribosomal subunit protein uL10</fullName>
    </recommendedName>
    <alternativeName>
        <fullName evidence="2">50S ribosomal protein L10</fullName>
    </alternativeName>
</protein>
<reference key="1">
    <citation type="journal article" date="2008" name="DNA Res.">
        <title>Complete genome sequence and comparative analysis of the wild-type commensal Escherichia coli strain SE11 isolated from a healthy adult.</title>
        <authorList>
            <person name="Oshima K."/>
            <person name="Toh H."/>
            <person name="Ogura Y."/>
            <person name="Sasamoto H."/>
            <person name="Morita H."/>
            <person name="Park S.-H."/>
            <person name="Ooka T."/>
            <person name="Iyoda S."/>
            <person name="Taylor T.D."/>
            <person name="Hayashi T."/>
            <person name="Itoh K."/>
            <person name="Hattori M."/>
        </authorList>
    </citation>
    <scope>NUCLEOTIDE SEQUENCE [LARGE SCALE GENOMIC DNA]</scope>
    <source>
        <strain>SE11</strain>
    </source>
</reference>
<name>RL10_ECOSE</name>
<organism>
    <name type="scientific">Escherichia coli (strain SE11)</name>
    <dbReference type="NCBI Taxonomy" id="409438"/>
    <lineage>
        <taxon>Bacteria</taxon>
        <taxon>Pseudomonadati</taxon>
        <taxon>Pseudomonadota</taxon>
        <taxon>Gammaproteobacteria</taxon>
        <taxon>Enterobacterales</taxon>
        <taxon>Enterobacteriaceae</taxon>
        <taxon>Escherichia</taxon>
    </lineage>
</organism>
<sequence>MALNLQDKQAIVAEVSEVAKGALSAVVADSRGVTVDKMTELRKAGREAGVYMRVVRNTLLRRAVEGTPFECLKDAFVGPTLIAYSMEHPGAAARLFKEFAKANAKFEVKAAAFEGELIPASQIDRLATLPTYEEAIARLMATMKEASAGKLVRTLAAVRDAKEAA</sequence>